<sequence length="97" mass="11475">MTKKKRENLGVAQEIDGLEEKLSRCRKDLEAVTSQLYRAELSPEDRRSLEKEKHTLMNKASKYEKELKLLRHENRKNTLLSVAIFTVFALLYAYWTM</sequence>
<keyword id="KW-0025">Alternative splicing</keyword>
<keyword id="KW-0175">Coiled coil</keyword>
<keyword id="KW-0472">Membrane</keyword>
<keyword id="KW-1185">Reference proteome</keyword>
<keyword id="KW-0812">Transmembrane</keyword>
<keyword id="KW-1133">Transmembrane helix</keyword>
<reference key="1">
    <citation type="journal article" date="2005" name="Science">
        <title>The transcriptional landscape of the mammalian genome.</title>
        <authorList>
            <person name="Carninci P."/>
            <person name="Kasukawa T."/>
            <person name="Katayama S."/>
            <person name="Gough J."/>
            <person name="Frith M.C."/>
            <person name="Maeda N."/>
            <person name="Oyama R."/>
            <person name="Ravasi T."/>
            <person name="Lenhard B."/>
            <person name="Wells C."/>
            <person name="Kodzius R."/>
            <person name="Shimokawa K."/>
            <person name="Bajic V.B."/>
            <person name="Brenner S.E."/>
            <person name="Batalov S."/>
            <person name="Forrest A.R."/>
            <person name="Zavolan M."/>
            <person name="Davis M.J."/>
            <person name="Wilming L.G."/>
            <person name="Aidinis V."/>
            <person name="Allen J.E."/>
            <person name="Ambesi-Impiombato A."/>
            <person name="Apweiler R."/>
            <person name="Aturaliya R.N."/>
            <person name="Bailey T.L."/>
            <person name="Bansal M."/>
            <person name="Baxter L."/>
            <person name="Beisel K.W."/>
            <person name="Bersano T."/>
            <person name="Bono H."/>
            <person name="Chalk A.M."/>
            <person name="Chiu K.P."/>
            <person name="Choudhary V."/>
            <person name="Christoffels A."/>
            <person name="Clutterbuck D.R."/>
            <person name="Crowe M.L."/>
            <person name="Dalla E."/>
            <person name="Dalrymple B.P."/>
            <person name="de Bono B."/>
            <person name="Della Gatta G."/>
            <person name="di Bernardo D."/>
            <person name="Down T."/>
            <person name="Engstrom P."/>
            <person name="Fagiolini M."/>
            <person name="Faulkner G."/>
            <person name="Fletcher C.F."/>
            <person name="Fukushima T."/>
            <person name="Furuno M."/>
            <person name="Futaki S."/>
            <person name="Gariboldi M."/>
            <person name="Georgii-Hemming P."/>
            <person name="Gingeras T.R."/>
            <person name="Gojobori T."/>
            <person name="Green R.E."/>
            <person name="Gustincich S."/>
            <person name="Harbers M."/>
            <person name="Hayashi Y."/>
            <person name="Hensch T.K."/>
            <person name="Hirokawa N."/>
            <person name="Hill D."/>
            <person name="Huminiecki L."/>
            <person name="Iacono M."/>
            <person name="Ikeo K."/>
            <person name="Iwama A."/>
            <person name="Ishikawa T."/>
            <person name="Jakt M."/>
            <person name="Kanapin A."/>
            <person name="Katoh M."/>
            <person name="Kawasawa Y."/>
            <person name="Kelso J."/>
            <person name="Kitamura H."/>
            <person name="Kitano H."/>
            <person name="Kollias G."/>
            <person name="Krishnan S.P."/>
            <person name="Kruger A."/>
            <person name="Kummerfeld S.K."/>
            <person name="Kurochkin I.V."/>
            <person name="Lareau L.F."/>
            <person name="Lazarevic D."/>
            <person name="Lipovich L."/>
            <person name="Liu J."/>
            <person name="Liuni S."/>
            <person name="McWilliam S."/>
            <person name="Madan Babu M."/>
            <person name="Madera M."/>
            <person name="Marchionni L."/>
            <person name="Matsuda H."/>
            <person name="Matsuzawa S."/>
            <person name="Miki H."/>
            <person name="Mignone F."/>
            <person name="Miyake S."/>
            <person name="Morris K."/>
            <person name="Mottagui-Tabar S."/>
            <person name="Mulder N."/>
            <person name="Nakano N."/>
            <person name="Nakauchi H."/>
            <person name="Ng P."/>
            <person name="Nilsson R."/>
            <person name="Nishiguchi S."/>
            <person name="Nishikawa S."/>
            <person name="Nori F."/>
            <person name="Ohara O."/>
            <person name="Okazaki Y."/>
            <person name="Orlando V."/>
            <person name="Pang K.C."/>
            <person name="Pavan W.J."/>
            <person name="Pavesi G."/>
            <person name="Pesole G."/>
            <person name="Petrovsky N."/>
            <person name="Piazza S."/>
            <person name="Reed J."/>
            <person name="Reid J.F."/>
            <person name="Ring B.Z."/>
            <person name="Ringwald M."/>
            <person name="Rost B."/>
            <person name="Ruan Y."/>
            <person name="Salzberg S.L."/>
            <person name="Sandelin A."/>
            <person name="Schneider C."/>
            <person name="Schoenbach C."/>
            <person name="Sekiguchi K."/>
            <person name="Semple C.A."/>
            <person name="Seno S."/>
            <person name="Sessa L."/>
            <person name="Sheng Y."/>
            <person name="Shibata Y."/>
            <person name="Shimada H."/>
            <person name="Shimada K."/>
            <person name="Silva D."/>
            <person name="Sinclair B."/>
            <person name="Sperling S."/>
            <person name="Stupka E."/>
            <person name="Sugiura K."/>
            <person name="Sultana R."/>
            <person name="Takenaka Y."/>
            <person name="Taki K."/>
            <person name="Tammoja K."/>
            <person name="Tan S.L."/>
            <person name="Tang S."/>
            <person name="Taylor M.S."/>
            <person name="Tegner J."/>
            <person name="Teichmann S.A."/>
            <person name="Ueda H.R."/>
            <person name="van Nimwegen E."/>
            <person name="Verardo R."/>
            <person name="Wei C.L."/>
            <person name="Yagi K."/>
            <person name="Yamanishi H."/>
            <person name="Zabarovsky E."/>
            <person name="Zhu S."/>
            <person name="Zimmer A."/>
            <person name="Hide W."/>
            <person name="Bult C."/>
            <person name="Grimmond S.M."/>
            <person name="Teasdale R.D."/>
            <person name="Liu E.T."/>
            <person name="Brusic V."/>
            <person name="Quackenbush J."/>
            <person name="Wahlestedt C."/>
            <person name="Mattick J.S."/>
            <person name="Hume D.A."/>
            <person name="Kai C."/>
            <person name="Sasaki D."/>
            <person name="Tomaru Y."/>
            <person name="Fukuda S."/>
            <person name="Kanamori-Katayama M."/>
            <person name="Suzuki M."/>
            <person name="Aoki J."/>
            <person name="Arakawa T."/>
            <person name="Iida J."/>
            <person name="Imamura K."/>
            <person name="Itoh M."/>
            <person name="Kato T."/>
            <person name="Kawaji H."/>
            <person name="Kawagashira N."/>
            <person name="Kawashima T."/>
            <person name="Kojima M."/>
            <person name="Kondo S."/>
            <person name="Konno H."/>
            <person name="Nakano K."/>
            <person name="Ninomiya N."/>
            <person name="Nishio T."/>
            <person name="Okada M."/>
            <person name="Plessy C."/>
            <person name="Shibata K."/>
            <person name="Shiraki T."/>
            <person name="Suzuki S."/>
            <person name="Tagami M."/>
            <person name="Waki K."/>
            <person name="Watahiki A."/>
            <person name="Okamura-Oho Y."/>
            <person name="Suzuki H."/>
            <person name="Kawai J."/>
            <person name="Hayashizaki Y."/>
        </authorList>
    </citation>
    <scope>NUCLEOTIDE SEQUENCE [LARGE SCALE MRNA] (ISOFORMS 1; 2 AND 3)</scope>
    <source>
        <strain>C57BL/6J</strain>
        <tissue>Embryo</tissue>
        <tissue>Kidney</tissue>
    </source>
</reference>
<reference key="2">
    <citation type="journal article" date="2004" name="Genome Res.">
        <title>The status, quality, and expansion of the NIH full-length cDNA project: the Mammalian Gene Collection (MGC).</title>
        <authorList>
            <consortium name="The MGC Project Team"/>
        </authorList>
    </citation>
    <scope>NUCLEOTIDE SEQUENCE [LARGE SCALE MRNA] (ISOFORM 1)</scope>
    <source>
        <tissue>Eye</tissue>
    </source>
</reference>
<reference key="3">
    <citation type="journal article" date="2010" name="Cell">
        <title>A tissue-specific atlas of mouse protein phosphorylation and expression.</title>
        <authorList>
            <person name="Huttlin E.L."/>
            <person name="Jedrychowski M.P."/>
            <person name="Elias J.E."/>
            <person name="Goswami T."/>
            <person name="Rad R."/>
            <person name="Beausoleil S.A."/>
            <person name="Villen J."/>
            <person name="Haas W."/>
            <person name="Sowa M.E."/>
            <person name="Gygi S.P."/>
        </authorList>
    </citation>
    <scope>IDENTIFICATION BY MASS SPECTROMETRY [LARGE SCALE ANALYSIS]</scope>
    <source>
        <tissue>Brown adipose tissue</tissue>
        <tissue>Kidney</tissue>
        <tissue>Liver</tissue>
        <tissue>Pancreas</tissue>
        <tissue>Testis</tissue>
    </source>
</reference>
<evidence type="ECO:0000255" key="1"/>
<evidence type="ECO:0000303" key="2">
    <source>
    </source>
</evidence>
<evidence type="ECO:0000305" key="3"/>
<accession>Q9D162</accession>
<accession>Q8BQL8</accession>
<accession>Q8C3L9</accession>
<accession>Q8R1Y8</accession>
<comment type="subcellular location">
    <subcellularLocation>
        <location evidence="3">Membrane</location>
        <topology evidence="3">Single-pass membrane protein</topology>
    </subcellularLocation>
</comment>
<comment type="alternative products">
    <event type="alternative splicing"/>
    <isoform>
        <id>Q9D162-1</id>
        <name>1</name>
        <sequence type="displayed"/>
    </isoform>
    <isoform>
        <id>Q9D162-2</id>
        <name>2</name>
        <sequence type="described" ref="VSP_028986"/>
    </isoform>
    <isoform>
        <id>Q9D162-3</id>
        <name>3</name>
        <sequence type="described" ref="VSP_028985"/>
    </isoform>
</comment>
<comment type="miscellaneous">
    <molecule>Isoform 3</molecule>
    <text evidence="3">May be produced at very low levels due to a premature stop codon in the mRNA, leading to nonsense-mediated mRNA decay.</text>
</comment>
<comment type="sequence caution" evidence="3">
    <conflict type="erroneous initiation">
        <sequence resource="EMBL-CDS" id="AAH22730"/>
    </conflict>
    <text>Extended N-terminus.</text>
</comment>
<comment type="sequence caution" evidence="3">
    <conflict type="erroneous initiation">
        <sequence resource="EMBL-CDS" id="BAB23065"/>
    </conflict>
    <text>Extended N-terminus.</text>
</comment>
<comment type="sequence caution" evidence="3">
    <conflict type="erroneous initiation">
        <sequence resource="EMBL-CDS" id="BAC33728"/>
    </conflict>
    <text>Extended N-terminus.</text>
</comment>
<gene>
    <name type="primary">Ccdc167</name>
</gene>
<protein>
    <recommendedName>
        <fullName>Coiled-coil domain-containing protein 167</fullName>
    </recommendedName>
</protein>
<dbReference type="EMBL" id="AK003900">
    <property type="protein sequence ID" value="BAB23065.1"/>
    <property type="status" value="ALT_INIT"/>
    <property type="molecule type" value="mRNA"/>
</dbReference>
<dbReference type="EMBL" id="AK049389">
    <property type="protein sequence ID" value="BAC33728.1"/>
    <property type="status" value="ALT_INIT"/>
    <property type="molecule type" value="mRNA"/>
</dbReference>
<dbReference type="EMBL" id="AK085526">
    <property type="protein sequence ID" value="BAC39463.1"/>
    <property type="molecule type" value="mRNA"/>
</dbReference>
<dbReference type="EMBL" id="BC022730">
    <property type="protein sequence ID" value="AAH22730.1"/>
    <property type="status" value="ALT_INIT"/>
    <property type="molecule type" value="mRNA"/>
</dbReference>
<dbReference type="CCDS" id="CCDS50051.1">
    <molecule id="Q9D162-1"/>
</dbReference>
<dbReference type="CCDS" id="CCDS50052.1">
    <molecule id="Q9D162-2"/>
</dbReference>
<dbReference type="RefSeq" id="NP_001157213.1">
    <molecule id="Q9D162-2"/>
    <property type="nucleotide sequence ID" value="NM_001163741.2"/>
</dbReference>
<dbReference type="RefSeq" id="NP_081058.1">
    <molecule id="Q9D162-1"/>
    <property type="nucleotide sequence ID" value="NM_026782.2"/>
</dbReference>
<dbReference type="SMR" id="Q9D162"/>
<dbReference type="FunCoup" id="Q9D162">
    <property type="interactions" value="33"/>
</dbReference>
<dbReference type="STRING" id="10090.ENSMUSP00000116591"/>
<dbReference type="iPTMnet" id="Q9D162"/>
<dbReference type="PhosphoSitePlus" id="Q9D162"/>
<dbReference type="PaxDb" id="10090-ENSMUSP00000116591"/>
<dbReference type="PeptideAtlas" id="Q9D162"/>
<dbReference type="ProteomicsDB" id="281244">
    <molecule id="Q9D162-1"/>
</dbReference>
<dbReference type="ProteomicsDB" id="281245">
    <molecule id="Q9D162-2"/>
</dbReference>
<dbReference type="ProteomicsDB" id="281246">
    <molecule id="Q9D162-3"/>
</dbReference>
<dbReference type="Pumba" id="Q9D162"/>
<dbReference type="Antibodypedia" id="50913">
    <property type="antibodies" value="49 antibodies from 10 providers"/>
</dbReference>
<dbReference type="Ensembl" id="ENSMUST00000123502.8">
    <molecule id="Q9D162-3"/>
    <property type="protein sequence ID" value="ENSMUSP00000119013.2"/>
    <property type="gene ID" value="ENSMUSG00000024018.19"/>
</dbReference>
<dbReference type="Ensembl" id="ENSMUST00000128751.3">
    <molecule id="Q9D162-1"/>
    <property type="protein sequence ID" value="ENSMUSP00000123612.2"/>
    <property type="gene ID" value="ENSMUSG00000024018.19"/>
</dbReference>
<dbReference type="Ensembl" id="ENSMUST00000129091.9">
    <molecule id="Q9D162-2"/>
    <property type="protein sequence ID" value="ENSMUSP00000116591.2"/>
    <property type="gene ID" value="ENSMUSG00000024018.19"/>
</dbReference>
<dbReference type="GeneID" id="68597"/>
<dbReference type="KEGG" id="mmu:68597"/>
<dbReference type="UCSC" id="uc008btj.2">
    <molecule id="Q9D162-2"/>
    <property type="organism name" value="mouse"/>
</dbReference>
<dbReference type="UCSC" id="uc008btk.2">
    <molecule id="Q9D162-1"/>
    <property type="organism name" value="mouse"/>
</dbReference>
<dbReference type="AGR" id="MGI:1915847"/>
<dbReference type="CTD" id="154467"/>
<dbReference type="MGI" id="MGI:1915847">
    <property type="gene designation" value="Ccdc167"/>
</dbReference>
<dbReference type="VEuPathDB" id="HostDB:ENSMUSG00000024018"/>
<dbReference type="eggNOG" id="ENOG502SAF4">
    <property type="taxonomic scope" value="Eukaryota"/>
</dbReference>
<dbReference type="GeneTree" id="ENSGT00390000010210"/>
<dbReference type="HOGENOM" id="CLU_152032_0_0_1"/>
<dbReference type="InParanoid" id="Q9D162"/>
<dbReference type="OMA" id="MAIMNER"/>
<dbReference type="OrthoDB" id="40072at9989"/>
<dbReference type="PhylomeDB" id="Q9D162"/>
<dbReference type="TreeFam" id="TF336097"/>
<dbReference type="BioGRID-ORCS" id="68597">
    <property type="hits" value="1 hit in 60 CRISPR screens"/>
</dbReference>
<dbReference type="ChiTaRS" id="Ccdc167">
    <property type="organism name" value="mouse"/>
</dbReference>
<dbReference type="PRO" id="PR:Q9D162"/>
<dbReference type="Proteomes" id="UP000000589">
    <property type="component" value="Chromosome 17"/>
</dbReference>
<dbReference type="RNAct" id="Q9D162">
    <property type="molecule type" value="protein"/>
</dbReference>
<dbReference type="Bgee" id="ENSMUSG00000024018">
    <property type="expression patterns" value="Expressed in dorsal pancreas and 213 other cell types or tissues"/>
</dbReference>
<dbReference type="ExpressionAtlas" id="Q9D162">
    <property type="expression patterns" value="baseline and differential"/>
</dbReference>
<dbReference type="GO" id="GO:0016020">
    <property type="term" value="C:membrane"/>
    <property type="evidence" value="ECO:0007669"/>
    <property type="project" value="UniProtKB-SubCell"/>
</dbReference>
<dbReference type="InterPro" id="IPR028194">
    <property type="entry name" value="CCDC-167"/>
</dbReference>
<dbReference type="PANTHER" id="PTHR31759">
    <property type="entry name" value="COILED-COIL DOMAIN-CONTAINING PROTEIN 167"/>
    <property type="match status" value="1"/>
</dbReference>
<dbReference type="PANTHER" id="PTHR31759:SF1">
    <property type="entry name" value="COILED-COIL DOMAIN-CONTAINING PROTEIN 167"/>
    <property type="match status" value="1"/>
</dbReference>
<dbReference type="Pfam" id="PF15188">
    <property type="entry name" value="CCDC-167"/>
    <property type="match status" value="1"/>
</dbReference>
<organism>
    <name type="scientific">Mus musculus</name>
    <name type="common">Mouse</name>
    <dbReference type="NCBI Taxonomy" id="10090"/>
    <lineage>
        <taxon>Eukaryota</taxon>
        <taxon>Metazoa</taxon>
        <taxon>Chordata</taxon>
        <taxon>Craniata</taxon>
        <taxon>Vertebrata</taxon>
        <taxon>Euteleostomi</taxon>
        <taxon>Mammalia</taxon>
        <taxon>Eutheria</taxon>
        <taxon>Euarchontoglires</taxon>
        <taxon>Glires</taxon>
        <taxon>Rodentia</taxon>
        <taxon>Myomorpha</taxon>
        <taxon>Muroidea</taxon>
        <taxon>Muridae</taxon>
        <taxon>Murinae</taxon>
        <taxon>Mus</taxon>
        <taxon>Mus</taxon>
    </lineage>
</organism>
<feature type="chain" id="PRO_0000308551" description="Coiled-coil domain-containing protein 167">
    <location>
        <begin position="1"/>
        <end position="97"/>
    </location>
</feature>
<feature type="transmembrane region" description="Helical" evidence="1">
    <location>
        <begin position="78"/>
        <end position="95"/>
    </location>
</feature>
<feature type="coiled-coil region" evidence="1">
    <location>
        <begin position="2"/>
        <end position="78"/>
    </location>
</feature>
<feature type="splice variant" id="VSP_028985" description="In isoform 3." evidence="2">
    <location>
        <position position="46"/>
    </location>
</feature>
<feature type="splice variant" id="VSP_028986" description="In isoform 2." evidence="2">
    <original>M</original>
    <variation>IRYTSFTL</variation>
    <location>
        <position position="97"/>
    </location>
</feature>
<proteinExistence type="evidence at protein level"/>
<name>CC167_MOUSE</name>